<proteinExistence type="inferred from homology"/>
<accession>Q0ABU4</accession>
<reference key="1">
    <citation type="submission" date="2006-08" db="EMBL/GenBank/DDBJ databases">
        <title>Complete sequence of Alkalilimnicola ehrilichei MLHE-1.</title>
        <authorList>
            <person name="Copeland A."/>
            <person name="Lucas S."/>
            <person name="Lapidus A."/>
            <person name="Barry K."/>
            <person name="Detter J.C."/>
            <person name="Glavina del Rio T."/>
            <person name="Hammon N."/>
            <person name="Israni S."/>
            <person name="Dalin E."/>
            <person name="Tice H."/>
            <person name="Pitluck S."/>
            <person name="Sims D."/>
            <person name="Brettin T."/>
            <person name="Bruce D."/>
            <person name="Han C."/>
            <person name="Tapia R."/>
            <person name="Gilna P."/>
            <person name="Schmutz J."/>
            <person name="Larimer F."/>
            <person name="Land M."/>
            <person name="Hauser L."/>
            <person name="Kyrpides N."/>
            <person name="Mikhailova N."/>
            <person name="Oremland R.S."/>
            <person name="Hoeft S.E."/>
            <person name="Switzer-Blum J."/>
            <person name="Kulp T."/>
            <person name="King G."/>
            <person name="Tabita R."/>
            <person name="Witte B."/>
            <person name="Santini J.M."/>
            <person name="Basu P."/>
            <person name="Hollibaugh J.T."/>
            <person name="Xie G."/>
            <person name="Stolz J.F."/>
            <person name="Richardson P."/>
        </authorList>
    </citation>
    <scope>NUCLEOTIDE SEQUENCE [LARGE SCALE GENOMIC DNA]</scope>
    <source>
        <strain>ATCC BAA-1101 / DSM 17681 / MLHE-1</strain>
    </source>
</reference>
<name>METXS_ALKEH</name>
<evidence type="ECO:0000255" key="1">
    <source>
        <dbReference type="HAMAP-Rule" id="MF_00296"/>
    </source>
</evidence>
<comment type="function">
    <text evidence="1">Transfers a succinyl group from succinyl-CoA to L-homoserine, forming succinyl-L-homoserine.</text>
</comment>
<comment type="catalytic activity">
    <reaction evidence="1">
        <text>L-homoserine + succinyl-CoA = O-succinyl-L-homoserine + CoA</text>
        <dbReference type="Rhea" id="RHEA:22008"/>
        <dbReference type="ChEBI" id="CHEBI:57287"/>
        <dbReference type="ChEBI" id="CHEBI:57292"/>
        <dbReference type="ChEBI" id="CHEBI:57476"/>
        <dbReference type="ChEBI" id="CHEBI:57661"/>
        <dbReference type="EC" id="2.3.1.46"/>
    </reaction>
</comment>
<comment type="pathway">
    <text evidence="1">Amino-acid biosynthesis; L-methionine biosynthesis via de novo pathway; O-succinyl-L-homoserine from L-homoserine: step 1/1.</text>
</comment>
<comment type="subunit">
    <text evidence="1">Homodimer.</text>
</comment>
<comment type="subcellular location">
    <subcellularLocation>
        <location evidence="1">Cytoplasm</location>
    </subcellularLocation>
</comment>
<comment type="similarity">
    <text evidence="1">Belongs to the AB hydrolase superfamily. MetX family.</text>
</comment>
<sequence length="384" mass="43094">MPKHLPADSVGIVEQHSLHFDEPLPLDCGRSLPAYDLVYETYGELNAERSNAILICHALSGSHHAAGYHSEEDRKPGWWEACVGPGKPIDTDRFYVVCCNNLGGCHGSTGPSSINPETHRPYGPDFPLVTVRDWVHSQARLADALGIERWAAVVGGSLGGMQAIQWAIDYPDRLGHVVAIAVAPRLSAQNIGFNEVARQAILTDPEFHGGRYYEHHTVPRRGLALARMLGHITYLSDDAMRDKFGRDLRADGGRYKFNFDVEFEVESYLRYQGRSFVDRFDANTYLLMTKVLDYFDPAAEYDHDLSAALAHVQARFLLISFSSDWRFPPERSREIVRALEDNQKPISYLEVETSQGHDAFLKPIPVYTEAFRAYMQGIAREVGA</sequence>
<gene>
    <name evidence="1" type="primary">metXS</name>
    <name type="ordered locus">Mlg_0338</name>
</gene>
<organism>
    <name type="scientific">Alkalilimnicola ehrlichii (strain ATCC BAA-1101 / DSM 17681 / MLHE-1)</name>
    <dbReference type="NCBI Taxonomy" id="187272"/>
    <lineage>
        <taxon>Bacteria</taxon>
        <taxon>Pseudomonadati</taxon>
        <taxon>Pseudomonadota</taxon>
        <taxon>Gammaproteobacteria</taxon>
        <taxon>Chromatiales</taxon>
        <taxon>Ectothiorhodospiraceae</taxon>
        <taxon>Alkalilimnicola</taxon>
    </lineage>
</organism>
<feature type="chain" id="PRO_1000115210" description="Homoserine O-succinyltransferase">
    <location>
        <begin position="1"/>
        <end position="384"/>
    </location>
</feature>
<feature type="domain" description="AB hydrolase-1" evidence="1">
    <location>
        <begin position="51"/>
        <end position="361"/>
    </location>
</feature>
<feature type="active site" description="Nucleophile" evidence="1">
    <location>
        <position position="157"/>
    </location>
</feature>
<feature type="active site" evidence="1">
    <location>
        <position position="324"/>
    </location>
</feature>
<feature type="active site" evidence="1">
    <location>
        <position position="357"/>
    </location>
</feature>
<feature type="binding site" evidence="1">
    <location>
        <position position="227"/>
    </location>
    <ligand>
        <name>substrate</name>
    </ligand>
</feature>
<feature type="binding site" evidence="1">
    <location>
        <position position="358"/>
    </location>
    <ligand>
        <name>substrate</name>
    </ligand>
</feature>
<feature type="site" description="Important for acyl-CoA specificity" evidence="1">
    <location>
        <position position="326"/>
    </location>
</feature>
<protein>
    <recommendedName>
        <fullName evidence="1">Homoserine O-succinyltransferase</fullName>
        <shortName evidence="1">HST</shortName>
        <ecNumber evidence="1">2.3.1.46</ecNumber>
    </recommendedName>
    <alternativeName>
        <fullName evidence="1">Homoserine transsuccinylase</fullName>
        <shortName evidence="1">HTS</shortName>
    </alternativeName>
</protein>
<keyword id="KW-0012">Acyltransferase</keyword>
<keyword id="KW-0028">Amino-acid biosynthesis</keyword>
<keyword id="KW-0963">Cytoplasm</keyword>
<keyword id="KW-0486">Methionine biosynthesis</keyword>
<keyword id="KW-1185">Reference proteome</keyword>
<keyword id="KW-0808">Transferase</keyword>
<dbReference type="EC" id="2.3.1.46" evidence="1"/>
<dbReference type="EMBL" id="CP000453">
    <property type="protein sequence ID" value="ABI55693.1"/>
    <property type="molecule type" value="Genomic_DNA"/>
</dbReference>
<dbReference type="RefSeq" id="WP_011628089.1">
    <property type="nucleotide sequence ID" value="NC_008340.1"/>
</dbReference>
<dbReference type="SMR" id="Q0ABU4"/>
<dbReference type="ESTHER" id="alheh-metx">
    <property type="family name" value="Homoserine_transacetylase"/>
</dbReference>
<dbReference type="KEGG" id="aeh:Mlg_0338"/>
<dbReference type="eggNOG" id="COG2021">
    <property type="taxonomic scope" value="Bacteria"/>
</dbReference>
<dbReference type="HOGENOM" id="CLU_028760_1_2_6"/>
<dbReference type="OrthoDB" id="9800754at2"/>
<dbReference type="UniPathway" id="UPA00051">
    <property type="reaction ID" value="UER00075"/>
</dbReference>
<dbReference type="Proteomes" id="UP000001962">
    <property type="component" value="Chromosome"/>
</dbReference>
<dbReference type="GO" id="GO:0005737">
    <property type="term" value="C:cytoplasm"/>
    <property type="evidence" value="ECO:0007669"/>
    <property type="project" value="UniProtKB-SubCell"/>
</dbReference>
<dbReference type="GO" id="GO:0004414">
    <property type="term" value="F:homoserine O-acetyltransferase activity"/>
    <property type="evidence" value="ECO:0007669"/>
    <property type="project" value="TreeGrafter"/>
</dbReference>
<dbReference type="GO" id="GO:0008899">
    <property type="term" value="F:homoserine O-succinyltransferase activity"/>
    <property type="evidence" value="ECO:0007669"/>
    <property type="project" value="UniProtKB-UniRule"/>
</dbReference>
<dbReference type="GO" id="GO:0009092">
    <property type="term" value="P:homoserine metabolic process"/>
    <property type="evidence" value="ECO:0007669"/>
    <property type="project" value="TreeGrafter"/>
</dbReference>
<dbReference type="GO" id="GO:0009086">
    <property type="term" value="P:methionine biosynthetic process"/>
    <property type="evidence" value="ECO:0007669"/>
    <property type="project" value="UniProtKB-UniRule"/>
</dbReference>
<dbReference type="FunFam" id="1.10.1740.110:FF:000001">
    <property type="entry name" value="Homoserine O-acetyltransferase"/>
    <property type="match status" value="1"/>
</dbReference>
<dbReference type="Gene3D" id="1.10.1740.110">
    <property type="match status" value="1"/>
</dbReference>
<dbReference type="Gene3D" id="3.40.50.1820">
    <property type="entry name" value="alpha/beta hydrolase"/>
    <property type="match status" value="1"/>
</dbReference>
<dbReference type="HAMAP" id="MF_00296">
    <property type="entry name" value="MetX_acyltransf"/>
    <property type="match status" value="1"/>
</dbReference>
<dbReference type="InterPro" id="IPR000073">
    <property type="entry name" value="AB_hydrolase_1"/>
</dbReference>
<dbReference type="InterPro" id="IPR029058">
    <property type="entry name" value="AB_hydrolase_fold"/>
</dbReference>
<dbReference type="InterPro" id="IPR008220">
    <property type="entry name" value="HAT_MetX-like"/>
</dbReference>
<dbReference type="NCBIfam" id="TIGR01392">
    <property type="entry name" value="homoserO_Ac_trn"/>
    <property type="match status" value="1"/>
</dbReference>
<dbReference type="NCBIfam" id="NF001209">
    <property type="entry name" value="PRK00175.1"/>
    <property type="match status" value="1"/>
</dbReference>
<dbReference type="PANTHER" id="PTHR32268">
    <property type="entry name" value="HOMOSERINE O-ACETYLTRANSFERASE"/>
    <property type="match status" value="1"/>
</dbReference>
<dbReference type="PANTHER" id="PTHR32268:SF11">
    <property type="entry name" value="HOMOSERINE O-ACETYLTRANSFERASE"/>
    <property type="match status" value="1"/>
</dbReference>
<dbReference type="Pfam" id="PF00561">
    <property type="entry name" value="Abhydrolase_1"/>
    <property type="match status" value="1"/>
</dbReference>
<dbReference type="PIRSF" id="PIRSF000443">
    <property type="entry name" value="Homoser_Ac_trans"/>
    <property type="match status" value="1"/>
</dbReference>
<dbReference type="SUPFAM" id="SSF53474">
    <property type="entry name" value="alpha/beta-Hydrolases"/>
    <property type="match status" value="1"/>
</dbReference>